<accession>Q1KLX9</accession>
<gene>
    <name evidence="1" type="primary">CAMP</name>
</gene>
<dbReference type="EMBL" id="DQ471363">
    <property type="protein sequence ID" value="ABE96627.1"/>
    <property type="molecule type" value="Genomic_DNA"/>
</dbReference>
<dbReference type="SMR" id="Q1KLX9"/>
<dbReference type="FunCoup" id="Q1KLX9">
    <property type="interactions" value="254"/>
</dbReference>
<dbReference type="STRING" id="61853.ENSNLEP00000007795"/>
<dbReference type="eggNOG" id="ENOG502SAES">
    <property type="taxonomic scope" value="Eukaryota"/>
</dbReference>
<dbReference type="InParanoid" id="Q1KLX9"/>
<dbReference type="Proteomes" id="UP000001073">
    <property type="component" value="Unplaced"/>
</dbReference>
<dbReference type="GO" id="GO:0005615">
    <property type="term" value="C:extracellular space"/>
    <property type="evidence" value="ECO:0007669"/>
    <property type="project" value="TreeGrafter"/>
</dbReference>
<dbReference type="GO" id="GO:0031982">
    <property type="term" value="C:vesicle"/>
    <property type="evidence" value="ECO:0007669"/>
    <property type="project" value="UniProtKB-SubCell"/>
</dbReference>
<dbReference type="GO" id="GO:0001530">
    <property type="term" value="F:lipopolysaccharide binding"/>
    <property type="evidence" value="ECO:0007669"/>
    <property type="project" value="TreeGrafter"/>
</dbReference>
<dbReference type="GO" id="GO:0061844">
    <property type="term" value="P:antimicrobial humoral immune response mediated by antimicrobial peptide"/>
    <property type="evidence" value="ECO:0007669"/>
    <property type="project" value="TreeGrafter"/>
</dbReference>
<dbReference type="GO" id="GO:0050829">
    <property type="term" value="P:defense response to Gram-negative bacterium"/>
    <property type="evidence" value="ECO:0007669"/>
    <property type="project" value="TreeGrafter"/>
</dbReference>
<dbReference type="GO" id="GO:0050830">
    <property type="term" value="P:defense response to Gram-positive bacterium"/>
    <property type="evidence" value="ECO:0007669"/>
    <property type="project" value="TreeGrafter"/>
</dbReference>
<dbReference type="GO" id="GO:0045087">
    <property type="term" value="P:innate immune response"/>
    <property type="evidence" value="ECO:0007669"/>
    <property type="project" value="UniProtKB-KW"/>
</dbReference>
<dbReference type="GO" id="GO:0042119">
    <property type="term" value="P:neutrophil activation"/>
    <property type="evidence" value="ECO:0000250"/>
    <property type="project" value="UniProtKB"/>
</dbReference>
<dbReference type="FunFam" id="3.10.450.10:FF:000003">
    <property type="entry name" value="Cathelicidin antimicrobial peptide"/>
    <property type="match status" value="1"/>
</dbReference>
<dbReference type="Gene3D" id="3.10.450.10">
    <property type="match status" value="1"/>
</dbReference>
<dbReference type="InterPro" id="IPR001894">
    <property type="entry name" value="Cathelicidin-like"/>
</dbReference>
<dbReference type="InterPro" id="IPR018216">
    <property type="entry name" value="Cathelicidin_CS"/>
</dbReference>
<dbReference type="InterPro" id="IPR022746">
    <property type="entry name" value="Cathlecidin_C"/>
</dbReference>
<dbReference type="InterPro" id="IPR046350">
    <property type="entry name" value="Cystatin_sf"/>
</dbReference>
<dbReference type="PANTHER" id="PTHR10206">
    <property type="entry name" value="CATHELICIDIN"/>
    <property type="match status" value="1"/>
</dbReference>
<dbReference type="PANTHER" id="PTHR10206:SF2">
    <property type="entry name" value="CATHELICIDIN ANTIMICROBIAL PEPTIDE"/>
    <property type="match status" value="1"/>
</dbReference>
<dbReference type="Pfam" id="PF12153">
    <property type="entry name" value="CAP18_C"/>
    <property type="match status" value="1"/>
</dbReference>
<dbReference type="Pfam" id="PF00666">
    <property type="entry name" value="Cathelicidins"/>
    <property type="match status" value="1"/>
</dbReference>
<dbReference type="SUPFAM" id="SSF54403">
    <property type="entry name" value="Cystatin/monellin"/>
    <property type="match status" value="1"/>
</dbReference>
<dbReference type="PROSITE" id="PS00946">
    <property type="entry name" value="CATHELICIDINS_1"/>
    <property type="match status" value="1"/>
</dbReference>
<dbReference type="PROSITE" id="PS00947">
    <property type="entry name" value="CATHELICIDINS_2"/>
    <property type="match status" value="1"/>
</dbReference>
<keyword id="KW-0044">Antibiotic</keyword>
<keyword id="KW-0929">Antimicrobial</keyword>
<keyword id="KW-0165">Cleavage on pair of basic residues</keyword>
<keyword id="KW-1015">Disulfide bond</keyword>
<keyword id="KW-0391">Immunity</keyword>
<keyword id="KW-0399">Innate immunity</keyword>
<keyword id="KW-1185">Reference proteome</keyword>
<keyword id="KW-0964">Secreted</keyword>
<keyword id="KW-0732">Signal</keyword>
<evidence type="ECO:0000250" key="1">
    <source>
        <dbReference type="UniProtKB" id="P49913"/>
    </source>
</evidence>
<evidence type="ECO:0000250" key="2">
    <source>
        <dbReference type="UniProtKB" id="P54229"/>
    </source>
</evidence>
<evidence type="ECO:0000255" key="3"/>
<evidence type="ECO:0000305" key="4"/>
<comment type="function">
    <text evidence="1">Antimicrobial protein that is an integral component of the innate immune system (By similarity). Binds to bacterial lipopolysaccharides (LPS) (By similarity). Acts via neutrophil N-formyl peptide receptors to enhance the release of CXCL2 (By similarity). Postsecretory processing generates multiple cathelicidin antimicrobial peptides with various lengths which act as a topical antimicrobial defense in sweat on skin (By similarity). The unprocessed precursor form, cathelicidin antimicrobial peptide, inhibits the growth of Gram-negative E.coli and E.aerogenes with efficiencies comparable to that of the mature peptide LL-37 (in vitro) (By similarity).</text>
</comment>
<comment type="function">
    <molecule>Antibacterial peptide LL-37</molecule>
    <text evidence="1">Antimicrobial peptide that is an integral component of the innate immune system (By similarity). Binds to bacterial lipopolysaccharides (LPS) (By similarity). Causes membrane permeabilization by forming transmembrane pores (in vitro) (By similarity). Causes lysis of E.coli (By similarity). Exhibits antimicrobial activity against Gram-negative bacteria such as P.aeruginosa, S.typhimurium, E.aerogenes, E.coli and P.syringae, Gram-positive bacteria such as L.monocytogenes, S.epidermidis, S.pyogenes and S.aureus, as well as vancomycin-resistant enterococci (in vitro) (By similarity). Exhibits antimicrobial activity against methicillin-resistant S.aureus, P.mirabilis, and C.albicans in low-salt media, but not in media containing 100 mM NaCl (in vitro) (By similarity). Forms chiral supramolecular assemblies with quinolone signal (PQS) molecules of P.aeruginosa, which may lead to interference of bacterial quorum signaling and perturbance of bacterial biofilm formation (By similarity). May form supramolecular fiber-like assemblies on bacterial membranes (By similarity). Induces cytokine and chemokine producation as well as TNF/TNFA and CSF2/GMCSF production in normal human keratinocytes (By similarity). Exhibits hemolytic activity against red blood cells (By similarity).</text>
</comment>
<comment type="function">
    <molecule>Antibacterial peptide FALL-39</molecule>
    <text evidence="1">Exhibits antimicrobial activity against E.coli and B.megaterium (in vitro).</text>
</comment>
<comment type="subunit">
    <molecule>Antibacterial peptide LL-37</molecule>
    <text evidence="1">Monomer, homodimer or homotrimer (in vitro) (By similarity). Oligomerizes as tetra- or hexamer in solution (in vitro) (By similarity).</text>
</comment>
<comment type="subcellular location">
    <subcellularLocation>
        <location evidence="2">Secreted</location>
    </subcellularLocation>
    <subcellularLocation>
        <location evidence="2">Vesicle</location>
    </subcellularLocation>
    <text evidence="2">Stored as pro-peptide in granules and phagolysosomes of neutrophils (By similarity). Secreted in sweat onto skin (By similarity).</text>
</comment>
<comment type="domain">
    <text evidence="2">The cathelin-like domain (CLD), which is the propeptide part, does not seem to exhibit auto-inhibitory function, as it does not inhibit the antibacterial activity of antibacterial peptide LL-37.</text>
</comment>
<comment type="domain">
    <molecule>Antibacterial peptide LL-37</molecule>
    <text evidence="2">Undergoes conformational change in the presence of lipid A, transitioning from a random coil to an alpha-helical structure.</text>
</comment>
<comment type="domain">
    <molecule>Antibacterial peptide LL-37</molecule>
    <text evidence="2">Residues 17-29 of LL-37 represent the active core of the antimicrobial peptide. Forms ribbon-like fibrils and exhibits antibacterial activity against Gram-positive M.luteus (By similarity). Also exhibits antibacterial activity against Gram-negative E.coli and P.fluorescens (By similarity).</text>
</comment>
<comment type="PTM">
    <text evidence="1">Proteolytically cleaved by proteinase PRTN3 into antibacterial peptide LL-37 (By similarity). Proteolytically cleaved by cathepsin CTSG and neutrophil elastase ELANE (By similarity).</text>
</comment>
<comment type="PTM">
    <molecule>Antibacterial peptide LL-37</molecule>
    <text evidence="1">Resistant to proteolytic degradation in solution, and when bound to both zwitterionic (mimicking mammalian membranes) and negatively charged membranes (mimicking bacterial membranes).</text>
</comment>
<comment type="PTM">
    <text evidence="1">After secretion onto the skin surface, the CAMP gene product is processed by a serine protease-dependent mechanism into multiple novel antimicrobial peptides distinct from and shorter than cathelicidin LL-37 (By similarity). These peptides show enhanced antimicrobial action, acquiring the ability to kill skin pathogens such as S.aureus, E.coli and C.albicans. These peptides have lost the ability to stimulate CXCL8/IL8 release from keratinocytes (By similarity). The peptides act synergistically, killing bacteria at lower concentrations when present together, and maintain activity at increased salt condition (By similarity).</text>
</comment>
<comment type="similarity">
    <text evidence="4">Belongs to the cathelicidin family.</text>
</comment>
<proteinExistence type="inferred from homology"/>
<sequence length="170" mass="19340">MDTQRDSPSLGRWSLVLLLLGLVMPLAIVAQVLSYQEAVLRAIDGINQRSSDANLYRLLDLDPRPTMDGDPDTPKPVSFTVKETVCPRTTQQSPEDCDFKKDGLVKRCMGTVTLNQARDSFDISCDKDNRRFALLGNFFRKAREKIGKEFKRIVQRIKDFLQHLVPRTEA</sequence>
<organism>
    <name type="scientific">Nomascus leucogenys</name>
    <name type="common">Northern white-cheeked gibbon</name>
    <name type="synonym">Hylobates leucogenys</name>
    <dbReference type="NCBI Taxonomy" id="61853"/>
    <lineage>
        <taxon>Eukaryota</taxon>
        <taxon>Metazoa</taxon>
        <taxon>Chordata</taxon>
        <taxon>Craniata</taxon>
        <taxon>Vertebrata</taxon>
        <taxon>Euteleostomi</taxon>
        <taxon>Mammalia</taxon>
        <taxon>Eutheria</taxon>
        <taxon>Euarchontoglires</taxon>
        <taxon>Primates</taxon>
        <taxon>Haplorrhini</taxon>
        <taxon>Catarrhini</taxon>
        <taxon>Hylobatidae</taxon>
        <taxon>Nomascus</taxon>
    </lineage>
</organism>
<name>CAMP_NOMLE</name>
<reference key="1">
    <citation type="journal article" date="2006" name="J. Biol. Chem.">
        <title>Evolution of the primate cathelicidin. Correlation between structural variations and antimicrobial activity.</title>
        <authorList>
            <person name="Zelezetsky I."/>
            <person name="Pontillo A."/>
            <person name="Puzzi L."/>
            <person name="Antcheva N."/>
            <person name="Segat L."/>
            <person name="Pacor S."/>
            <person name="Crovella S."/>
            <person name="Tossi A."/>
        </authorList>
    </citation>
    <scope>NUCLEOTIDE SEQUENCE [GENOMIC DNA]</scope>
</reference>
<feature type="signal peptide" evidence="3">
    <location>
        <begin position="1"/>
        <end position="30"/>
    </location>
</feature>
<feature type="propeptide" id="PRO_0000251758" description="Cathelin-like domain (CLD)" evidence="1">
    <location>
        <begin position="31"/>
        <end position="131"/>
    </location>
</feature>
<feature type="chain" id="PRO_0000251759" description="Antibacterial peptide FALL-39" evidence="1">
    <location>
        <begin position="132"/>
        <end position="170"/>
    </location>
</feature>
<feature type="chain" id="PRO_0000251760" description="Antibacterial peptide LL-37" evidence="1">
    <location>
        <begin position="134"/>
        <end position="170"/>
    </location>
</feature>
<feature type="region of interest" description="Active core" evidence="1">
    <location>
        <begin position="150"/>
        <end position="162"/>
    </location>
</feature>
<feature type="disulfide bond" evidence="1">
    <location>
        <begin position="86"/>
        <end position="97"/>
    </location>
</feature>
<feature type="disulfide bond" evidence="1">
    <location>
        <begin position="108"/>
        <end position="125"/>
    </location>
</feature>
<protein>
    <recommendedName>
        <fullName evidence="1">Cathelicidin antimicrobial peptide</fullName>
    </recommendedName>
    <component>
        <recommendedName>
            <fullName evidence="1">Antibacterial peptide FALL-39</fullName>
        </recommendedName>
        <alternativeName>
            <fullName evidence="1">FALL-39 peptide antibiotic</fullName>
        </alternativeName>
    </component>
    <component>
        <recommendedName>
            <fullName evidence="1">Antibacterial peptide LL-37</fullName>
        </recommendedName>
    </component>
</protein>